<comment type="catalytic activity">
    <reaction evidence="1">
        <text>tRNA(Phe) + L-phenylalanine + ATP = L-phenylalanyl-tRNA(Phe) + AMP + diphosphate + H(+)</text>
        <dbReference type="Rhea" id="RHEA:19413"/>
        <dbReference type="Rhea" id="RHEA-COMP:9668"/>
        <dbReference type="Rhea" id="RHEA-COMP:9699"/>
        <dbReference type="ChEBI" id="CHEBI:15378"/>
        <dbReference type="ChEBI" id="CHEBI:30616"/>
        <dbReference type="ChEBI" id="CHEBI:33019"/>
        <dbReference type="ChEBI" id="CHEBI:58095"/>
        <dbReference type="ChEBI" id="CHEBI:78442"/>
        <dbReference type="ChEBI" id="CHEBI:78531"/>
        <dbReference type="ChEBI" id="CHEBI:456215"/>
        <dbReference type="EC" id="6.1.1.20"/>
    </reaction>
</comment>
<comment type="cofactor">
    <cofactor evidence="1">
        <name>Mg(2+)</name>
        <dbReference type="ChEBI" id="CHEBI:18420"/>
    </cofactor>
    <text evidence="1">Binds 2 magnesium ions per tetramer.</text>
</comment>
<comment type="subunit">
    <text evidence="1">Tetramer of two alpha and two beta subunits.</text>
</comment>
<comment type="subcellular location">
    <subcellularLocation>
        <location>Cytoplasm</location>
    </subcellularLocation>
</comment>
<comment type="similarity">
    <text evidence="1">Belongs to the phenylalanyl-tRNA synthetase beta subunit family. Type 1 subfamily.</text>
</comment>
<sequence>MLISNEWLKEYVTIDDSVSDLAERITRTGIEVDDLIDYTKDIKNLVVGFVKSKEKHPDADKLNVCQVDIGEDEPVQIVCGAPNVDAGQYVIVAKVGGRLPGGIKIKRAKLRGERSEGMICSLQEIGISSNYIPKSFESGIYVFSESQVPGTDALQALYLDDQVMEFDLTPNRADALSMIGTAYEVAALYNTKMTKPETTSNELELSANDELTVTIENEDKVPYYSARVVHDVTIEPSPIWMQARLIKAGIRPINNVVDISNYVLLEYGQPLHMFDQDAIGSQQIVVRQANEGEKMTTLDDTERELLTSDIVITNGQTPIALAGVMGGDFSEVKEQTSNIVIEGAIFDPVSIRHTSRRLNLRSESSSRFEKGIATEFVDEAVDRACYLLQTYANGKVLKDRVSSGELGAFITPIDITADKINRTIGFDLSQNDIVTIFNQLGFDTEINDDVITVLVPSRRKDITIKEDLIEEVARIYGYDDIPSTLPVFDKVTSGQLTDRQYKTRMVKEVLEGAGLDQAITYSLVSKEDATAFSMQQRQTIDLLMPMSEAHASLRQSLLPHLIEVASYNVARKNKDVKLFEIGNVFFANGEGELPDQVEYLSGILTGDYVVNQWQGKKETVDFYLAKGVVDRVSEKLNLEFSYRRADIDGLHPGRTAEILLENKVVGFIGELHPTLAADNDLKRTYVFELNFDALMAVSVGYINYQPIPRFPGMSRDIALEVDQNIPAADLLSTIHAHGGNILKDTLVFDVYQGEHLEKGKKSIAIRLNYLDTEETLTDERVSKVQAEIEAALIEQGAVIR</sequence>
<name>SYFB_STAAU</name>
<evidence type="ECO:0000255" key="1">
    <source>
        <dbReference type="HAMAP-Rule" id="MF_00283"/>
    </source>
</evidence>
<gene>
    <name evidence="1" type="primary">pheT</name>
</gene>
<reference key="1">
    <citation type="journal article" date="2001" name="Protein Expr. Purif.">
        <title>Identification, cloning, and expression of a functional phenylalanyl-tRNA synthetase (pheRS) from Staphylococcus aureus.</title>
        <authorList>
            <person name="Savopoulos J.W."/>
            <person name="Hibbs M."/>
            <person name="Jones E.J."/>
            <person name="Mensah L."/>
            <person name="Richardson C."/>
            <person name="Fosberry A."/>
            <person name="Downes R."/>
            <person name="Fox S.G."/>
            <person name="Brown J.R."/>
            <person name="Jenkins O."/>
        </authorList>
    </citation>
    <scope>NUCLEOTIDE SEQUENCE [GENOMIC DNA]</scope>
    <source>
        <strain>WCUH29 / NCIMB 40771</strain>
    </source>
</reference>
<protein>
    <recommendedName>
        <fullName evidence="1">Phenylalanine--tRNA ligase beta subunit</fullName>
        <ecNumber evidence="1">6.1.1.20</ecNumber>
    </recommendedName>
    <alternativeName>
        <fullName evidence="1">Phenylalanyl-tRNA synthetase beta subunit</fullName>
        <shortName evidence="1">PheRS</shortName>
    </alternativeName>
</protein>
<dbReference type="EC" id="6.1.1.20" evidence="1"/>
<dbReference type="EMBL" id="AF327741">
    <property type="protein sequence ID" value="AAK15705.1"/>
    <property type="molecule type" value="Genomic_DNA"/>
</dbReference>
<dbReference type="RefSeq" id="WP_031825998.1">
    <property type="nucleotide sequence ID" value="NZ_CP039156.1"/>
</dbReference>
<dbReference type="SMR" id="Q9AGR3"/>
<dbReference type="BindingDB" id="Q9AGR3"/>
<dbReference type="GO" id="GO:0009328">
    <property type="term" value="C:phenylalanine-tRNA ligase complex"/>
    <property type="evidence" value="ECO:0007669"/>
    <property type="project" value="TreeGrafter"/>
</dbReference>
<dbReference type="GO" id="GO:0005524">
    <property type="term" value="F:ATP binding"/>
    <property type="evidence" value="ECO:0007669"/>
    <property type="project" value="UniProtKB-UniRule"/>
</dbReference>
<dbReference type="GO" id="GO:0140096">
    <property type="term" value="F:catalytic activity, acting on a protein"/>
    <property type="evidence" value="ECO:0007669"/>
    <property type="project" value="UniProtKB-ARBA"/>
</dbReference>
<dbReference type="GO" id="GO:0000287">
    <property type="term" value="F:magnesium ion binding"/>
    <property type="evidence" value="ECO:0007669"/>
    <property type="project" value="UniProtKB-UniRule"/>
</dbReference>
<dbReference type="GO" id="GO:0004826">
    <property type="term" value="F:phenylalanine-tRNA ligase activity"/>
    <property type="evidence" value="ECO:0007669"/>
    <property type="project" value="UniProtKB-UniRule"/>
</dbReference>
<dbReference type="GO" id="GO:0016740">
    <property type="term" value="F:transferase activity"/>
    <property type="evidence" value="ECO:0007669"/>
    <property type="project" value="UniProtKB-ARBA"/>
</dbReference>
<dbReference type="GO" id="GO:0000049">
    <property type="term" value="F:tRNA binding"/>
    <property type="evidence" value="ECO:0007669"/>
    <property type="project" value="UniProtKB-KW"/>
</dbReference>
<dbReference type="GO" id="GO:0006432">
    <property type="term" value="P:phenylalanyl-tRNA aminoacylation"/>
    <property type="evidence" value="ECO:0007669"/>
    <property type="project" value="UniProtKB-UniRule"/>
</dbReference>
<dbReference type="CDD" id="cd00769">
    <property type="entry name" value="PheRS_beta_core"/>
    <property type="match status" value="1"/>
</dbReference>
<dbReference type="CDD" id="cd02796">
    <property type="entry name" value="tRNA_bind_bactPheRS"/>
    <property type="match status" value="1"/>
</dbReference>
<dbReference type="FunFam" id="2.40.50.140:FF:000045">
    <property type="entry name" value="Phenylalanine--tRNA ligase beta subunit"/>
    <property type="match status" value="1"/>
</dbReference>
<dbReference type="FunFam" id="3.30.56.10:FF:000002">
    <property type="entry name" value="Phenylalanine--tRNA ligase beta subunit"/>
    <property type="match status" value="1"/>
</dbReference>
<dbReference type="FunFam" id="3.30.70.380:FF:000001">
    <property type="entry name" value="Phenylalanine--tRNA ligase beta subunit"/>
    <property type="match status" value="1"/>
</dbReference>
<dbReference type="FunFam" id="3.30.930.10:FF:000022">
    <property type="entry name" value="Phenylalanine--tRNA ligase beta subunit"/>
    <property type="match status" value="1"/>
</dbReference>
<dbReference type="FunFam" id="3.50.40.10:FF:000001">
    <property type="entry name" value="Phenylalanine--tRNA ligase beta subunit"/>
    <property type="match status" value="1"/>
</dbReference>
<dbReference type="Gene3D" id="3.30.56.10">
    <property type="match status" value="2"/>
</dbReference>
<dbReference type="Gene3D" id="3.30.930.10">
    <property type="entry name" value="Bira Bifunctional Protein, Domain 2"/>
    <property type="match status" value="1"/>
</dbReference>
<dbReference type="Gene3D" id="3.30.70.380">
    <property type="entry name" value="Ferrodoxin-fold anticodon-binding domain"/>
    <property type="match status" value="1"/>
</dbReference>
<dbReference type="Gene3D" id="2.40.50.140">
    <property type="entry name" value="Nucleic acid-binding proteins"/>
    <property type="match status" value="1"/>
</dbReference>
<dbReference type="Gene3D" id="3.50.40.10">
    <property type="entry name" value="Phenylalanyl-trna Synthetase, Chain B, domain 3"/>
    <property type="match status" value="1"/>
</dbReference>
<dbReference type="HAMAP" id="MF_00283">
    <property type="entry name" value="Phe_tRNA_synth_beta1"/>
    <property type="match status" value="1"/>
</dbReference>
<dbReference type="InterPro" id="IPR045864">
    <property type="entry name" value="aa-tRNA-synth_II/BPL/LPL"/>
</dbReference>
<dbReference type="InterPro" id="IPR005146">
    <property type="entry name" value="B3/B4_tRNA-bd"/>
</dbReference>
<dbReference type="InterPro" id="IPR009061">
    <property type="entry name" value="DNA-bd_dom_put_sf"/>
</dbReference>
<dbReference type="InterPro" id="IPR005121">
    <property type="entry name" value="Fdx_antiC-bd"/>
</dbReference>
<dbReference type="InterPro" id="IPR036690">
    <property type="entry name" value="Fdx_antiC-bd_sf"/>
</dbReference>
<dbReference type="InterPro" id="IPR012340">
    <property type="entry name" value="NA-bd_OB-fold"/>
</dbReference>
<dbReference type="InterPro" id="IPR045060">
    <property type="entry name" value="Phe-tRNA-ligase_IIc_bsu"/>
</dbReference>
<dbReference type="InterPro" id="IPR004532">
    <property type="entry name" value="Phe-tRNA-ligase_IIc_bsu_bact"/>
</dbReference>
<dbReference type="InterPro" id="IPR020825">
    <property type="entry name" value="Phe-tRNA_synthase-like_B3/B4"/>
</dbReference>
<dbReference type="InterPro" id="IPR041616">
    <property type="entry name" value="PheRS_beta_core"/>
</dbReference>
<dbReference type="InterPro" id="IPR002547">
    <property type="entry name" value="tRNA-bd_dom"/>
</dbReference>
<dbReference type="InterPro" id="IPR033714">
    <property type="entry name" value="tRNA_bind_bactPheRS"/>
</dbReference>
<dbReference type="InterPro" id="IPR005147">
    <property type="entry name" value="tRNA_synthase_B5-dom"/>
</dbReference>
<dbReference type="NCBIfam" id="TIGR00472">
    <property type="entry name" value="pheT_bact"/>
    <property type="match status" value="1"/>
</dbReference>
<dbReference type="NCBIfam" id="NF045760">
    <property type="entry name" value="YtpR"/>
    <property type="match status" value="1"/>
</dbReference>
<dbReference type="PANTHER" id="PTHR10947:SF0">
    <property type="entry name" value="PHENYLALANINE--TRNA LIGASE BETA SUBUNIT"/>
    <property type="match status" value="1"/>
</dbReference>
<dbReference type="PANTHER" id="PTHR10947">
    <property type="entry name" value="PHENYLALANYL-TRNA SYNTHETASE BETA CHAIN AND LEUCINE-RICH REPEAT-CONTAINING PROTEIN 47"/>
    <property type="match status" value="1"/>
</dbReference>
<dbReference type="Pfam" id="PF03483">
    <property type="entry name" value="B3_4"/>
    <property type="match status" value="1"/>
</dbReference>
<dbReference type="Pfam" id="PF03484">
    <property type="entry name" value="B5"/>
    <property type="match status" value="1"/>
</dbReference>
<dbReference type="Pfam" id="PF03147">
    <property type="entry name" value="FDX-ACB"/>
    <property type="match status" value="1"/>
</dbReference>
<dbReference type="Pfam" id="PF01588">
    <property type="entry name" value="tRNA_bind"/>
    <property type="match status" value="1"/>
</dbReference>
<dbReference type="Pfam" id="PF17759">
    <property type="entry name" value="tRNA_synthFbeta"/>
    <property type="match status" value="1"/>
</dbReference>
<dbReference type="SMART" id="SM00873">
    <property type="entry name" value="B3_4"/>
    <property type="match status" value="1"/>
</dbReference>
<dbReference type="SMART" id="SM00874">
    <property type="entry name" value="B5"/>
    <property type="match status" value="1"/>
</dbReference>
<dbReference type="SMART" id="SM00896">
    <property type="entry name" value="FDX-ACB"/>
    <property type="match status" value="1"/>
</dbReference>
<dbReference type="SUPFAM" id="SSF54991">
    <property type="entry name" value="Anticodon-binding domain of PheRS"/>
    <property type="match status" value="1"/>
</dbReference>
<dbReference type="SUPFAM" id="SSF55681">
    <property type="entry name" value="Class II aaRS and biotin synthetases"/>
    <property type="match status" value="1"/>
</dbReference>
<dbReference type="SUPFAM" id="SSF50249">
    <property type="entry name" value="Nucleic acid-binding proteins"/>
    <property type="match status" value="1"/>
</dbReference>
<dbReference type="SUPFAM" id="SSF56037">
    <property type="entry name" value="PheT/TilS domain"/>
    <property type="match status" value="1"/>
</dbReference>
<dbReference type="SUPFAM" id="SSF46955">
    <property type="entry name" value="Putative DNA-binding domain"/>
    <property type="match status" value="1"/>
</dbReference>
<dbReference type="PROSITE" id="PS51483">
    <property type="entry name" value="B5"/>
    <property type="match status" value="1"/>
</dbReference>
<dbReference type="PROSITE" id="PS51447">
    <property type="entry name" value="FDX_ACB"/>
    <property type="match status" value="1"/>
</dbReference>
<dbReference type="PROSITE" id="PS50886">
    <property type="entry name" value="TRBD"/>
    <property type="match status" value="1"/>
</dbReference>
<proteinExistence type="inferred from homology"/>
<keyword id="KW-0030">Aminoacyl-tRNA synthetase</keyword>
<keyword id="KW-0067">ATP-binding</keyword>
<keyword id="KW-0963">Cytoplasm</keyword>
<keyword id="KW-0436">Ligase</keyword>
<keyword id="KW-0460">Magnesium</keyword>
<keyword id="KW-0479">Metal-binding</keyword>
<keyword id="KW-0547">Nucleotide-binding</keyword>
<keyword id="KW-0648">Protein biosynthesis</keyword>
<keyword id="KW-0694">RNA-binding</keyword>
<keyword id="KW-0820">tRNA-binding</keyword>
<feature type="chain" id="PRO_0000126953" description="Phenylalanine--tRNA ligase beta subunit">
    <location>
        <begin position="1"/>
        <end position="800"/>
    </location>
</feature>
<feature type="domain" description="tRNA-binding" evidence="1">
    <location>
        <begin position="39"/>
        <end position="154"/>
    </location>
</feature>
<feature type="domain" description="B5" evidence="1">
    <location>
        <begin position="408"/>
        <end position="483"/>
    </location>
</feature>
<feature type="domain" description="FDX-ACB" evidence="1">
    <location>
        <begin position="708"/>
        <end position="800"/>
    </location>
</feature>
<feature type="binding site" evidence="1">
    <location>
        <position position="461"/>
    </location>
    <ligand>
        <name>Mg(2+)</name>
        <dbReference type="ChEBI" id="CHEBI:18420"/>
        <note>shared with alpha subunit</note>
    </ligand>
</feature>
<feature type="binding site" evidence="1">
    <location>
        <position position="467"/>
    </location>
    <ligand>
        <name>Mg(2+)</name>
        <dbReference type="ChEBI" id="CHEBI:18420"/>
        <note>shared with alpha subunit</note>
    </ligand>
</feature>
<feature type="binding site" evidence="1">
    <location>
        <position position="470"/>
    </location>
    <ligand>
        <name>Mg(2+)</name>
        <dbReference type="ChEBI" id="CHEBI:18420"/>
        <note>shared with alpha subunit</note>
    </ligand>
</feature>
<feature type="binding site" evidence="1">
    <location>
        <position position="471"/>
    </location>
    <ligand>
        <name>Mg(2+)</name>
        <dbReference type="ChEBI" id="CHEBI:18420"/>
        <note>shared with alpha subunit</note>
    </ligand>
</feature>
<organism>
    <name type="scientific">Staphylococcus aureus</name>
    <dbReference type="NCBI Taxonomy" id="1280"/>
    <lineage>
        <taxon>Bacteria</taxon>
        <taxon>Bacillati</taxon>
        <taxon>Bacillota</taxon>
        <taxon>Bacilli</taxon>
        <taxon>Bacillales</taxon>
        <taxon>Staphylococcaceae</taxon>
        <taxon>Staphylococcus</taxon>
    </lineage>
</organism>
<accession>Q9AGR3</accession>